<keyword id="KW-0378">Hydrolase</keyword>
<accession>D5CZH0</accession>
<evidence type="ECO:0000255" key="1">
    <source>
        <dbReference type="HAMAP-Rule" id="MF_00831"/>
    </source>
</evidence>
<sequence>MPKSVIIPAGSSAPLAPFVPGTLADGVVYVSGTLAFDQHNNVLFADDPKAQTRHVLETIRKVIETAGGTMADVTFNSIFITDWKNYAAINEIYAEFFPGDKPARFCIQCGLVKPDALVEIATIAHIAK</sequence>
<feature type="chain" id="PRO_0000402739" description="3-aminoacrylate deaminase RutC">
    <location>
        <begin position="1"/>
        <end position="128"/>
    </location>
</feature>
<reference key="1">
    <citation type="journal article" date="2010" name="Proc. Natl. Acad. Sci. U.S.A.">
        <title>Identification of protective and broadly conserved vaccine antigens from the genome of extraintestinal pathogenic Escherichia coli.</title>
        <authorList>
            <person name="Moriel D.G."/>
            <person name="Bertoldi I."/>
            <person name="Spagnuolo A."/>
            <person name="Marchi S."/>
            <person name="Rosini R."/>
            <person name="Nesta B."/>
            <person name="Pastorello I."/>
            <person name="Corea V.A."/>
            <person name="Torricelli G."/>
            <person name="Cartocci E."/>
            <person name="Savino S."/>
            <person name="Scarselli M."/>
            <person name="Dobrindt U."/>
            <person name="Hacker J."/>
            <person name="Tettelin H."/>
            <person name="Tallon L.J."/>
            <person name="Sullivan S."/>
            <person name="Wieler L.H."/>
            <person name="Ewers C."/>
            <person name="Pickard D."/>
            <person name="Dougan G."/>
            <person name="Fontana M.R."/>
            <person name="Rappuoli R."/>
            <person name="Pizza M."/>
            <person name="Serino L."/>
        </authorList>
    </citation>
    <scope>NUCLEOTIDE SEQUENCE [LARGE SCALE GENOMIC DNA]</scope>
    <source>
        <strain>IHE3034 / ExPEC</strain>
    </source>
</reference>
<organism>
    <name type="scientific">Escherichia coli O18:K1:H7 (strain IHE3034 / ExPEC)</name>
    <dbReference type="NCBI Taxonomy" id="714962"/>
    <lineage>
        <taxon>Bacteria</taxon>
        <taxon>Pseudomonadati</taxon>
        <taxon>Pseudomonadota</taxon>
        <taxon>Gammaproteobacteria</taxon>
        <taxon>Enterobacterales</taxon>
        <taxon>Enterobacteriaceae</taxon>
        <taxon>Escherichia</taxon>
    </lineage>
</organism>
<protein>
    <recommendedName>
        <fullName evidence="1">3-aminoacrylate deaminase RutC</fullName>
        <shortName evidence="1">3-AA deaminase</shortName>
        <ecNumber evidence="1">3.5.-.-</ecNumber>
    </recommendedName>
</protein>
<dbReference type="EC" id="3.5.-.-" evidence="1"/>
<dbReference type="EMBL" id="CP001969">
    <property type="protein sequence ID" value="ADE90297.1"/>
    <property type="molecule type" value="Genomic_DNA"/>
</dbReference>
<dbReference type="RefSeq" id="WP_001126780.1">
    <property type="nucleotide sequence ID" value="NC_017628.1"/>
</dbReference>
<dbReference type="SMR" id="D5CZH0"/>
<dbReference type="GeneID" id="75171086"/>
<dbReference type="KEGG" id="eih:ECOK1_1062"/>
<dbReference type="PATRIC" id="fig|714962.3.peg.1076"/>
<dbReference type="HOGENOM" id="CLU_100715_7_3_6"/>
<dbReference type="GO" id="GO:0005829">
    <property type="term" value="C:cytosol"/>
    <property type="evidence" value="ECO:0007669"/>
    <property type="project" value="TreeGrafter"/>
</dbReference>
<dbReference type="GO" id="GO:0019239">
    <property type="term" value="F:deaminase activity"/>
    <property type="evidence" value="ECO:0007669"/>
    <property type="project" value="TreeGrafter"/>
</dbReference>
<dbReference type="GO" id="GO:0019740">
    <property type="term" value="P:nitrogen utilization"/>
    <property type="evidence" value="ECO:0007669"/>
    <property type="project" value="UniProtKB-UniRule"/>
</dbReference>
<dbReference type="GO" id="GO:0006212">
    <property type="term" value="P:uracil catabolic process"/>
    <property type="evidence" value="ECO:0007669"/>
    <property type="project" value="UniProtKB-UniRule"/>
</dbReference>
<dbReference type="CDD" id="cd00448">
    <property type="entry name" value="YjgF_YER057c_UK114_family"/>
    <property type="match status" value="1"/>
</dbReference>
<dbReference type="FunFam" id="3.30.1330.40:FF:000003">
    <property type="entry name" value="Putative aminoacrylate peracid reductase RutC"/>
    <property type="match status" value="1"/>
</dbReference>
<dbReference type="Gene3D" id="3.30.1330.40">
    <property type="entry name" value="RutC-like"/>
    <property type="match status" value="1"/>
</dbReference>
<dbReference type="HAMAP" id="MF_00831">
    <property type="entry name" value="RutC"/>
    <property type="match status" value="1"/>
</dbReference>
<dbReference type="InterPro" id="IPR019897">
    <property type="entry name" value="RidA_CS"/>
</dbReference>
<dbReference type="InterPro" id="IPR019898">
    <property type="entry name" value="RutC"/>
</dbReference>
<dbReference type="InterPro" id="IPR035959">
    <property type="entry name" value="RutC-like_sf"/>
</dbReference>
<dbReference type="InterPro" id="IPR006175">
    <property type="entry name" value="YjgF/YER057c/UK114"/>
</dbReference>
<dbReference type="NCBIfam" id="TIGR03610">
    <property type="entry name" value="RutC"/>
    <property type="match status" value="1"/>
</dbReference>
<dbReference type="PANTHER" id="PTHR11803">
    <property type="entry name" value="2-IMINOBUTANOATE/2-IMINOPROPANOATE DEAMINASE RIDA"/>
    <property type="match status" value="1"/>
</dbReference>
<dbReference type="PANTHER" id="PTHR11803:SF58">
    <property type="entry name" value="PROTEIN HMF1-RELATED"/>
    <property type="match status" value="1"/>
</dbReference>
<dbReference type="Pfam" id="PF01042">
    <property type="entry name" value="Ribonuc_L-PSP"/>
    <property type="match status" value="1"/>
</dbReference>
<dbReference type="SUPFAM" id="SSF55298">
    <property type="entry name" value="YjgF-like"/>
    <property type="match status" value="1"/>
</dbReference>
<dbReference type="PROSITE" id="PS01094">
    <property type="entry name" value="UPF0076"/>
    <property type="match status" value="1"/>
</dbReference>
<comment type="function">
    <text evidence="1">Involved in pyrimidine catabolism. Catalyzes the deamination of 3-aminoacrylate to malonic semialdehyde, a reaction that can also occur spontaneously. RutC may facilitate the reaction and modulate the metabolic fitness, rather than catalyzing essential functions.</text>
</comment>
<comment type="catalytic activity">
    <reaction evidence="1">
        <text>(Z)-3-aminoacrylate + H2O + H(+) = 3-oxopropanoate + NH4(+)</text>
        <dbReference type="Rhea" id="RHEA:34947"/>
        <dbReference type="ChEBI" id="CHEBI:15377"/>
        <dbReference type="ChEBI" id="CHEBI:15378"/>
        <dbReference type="ChEBI" id="CHEBI:28938"/>
        <dbReference type="ChEBI" id="CHEBI:33190"/>
        <dbReference type="ChEBI" id="CHEBI:59894"/>
    </reaction>
</comment>
<comment type="subunit">
    <text evidence="1">Homotrimer.</text>
</comment>
<comment type="similarity">
    <text evidence="1">Belongs to the RutC family.</text>
</comment>
<gene>
    <name evidence="1" type="primary">rutC</name>
    <name type="ordered locus">ECOK1_1062</name>
</gene>
<proteinExistence type="inferred from homology"/>
<name>RUTC_ECOKI</name>